<comment type="similarity">
    <text evidence="1">Belongs to the bacterial ribosomal protein bL28 family.</text>
</comment>
<evidence type="ECO:0000255" key="1">
    <source>
        <dbReference type="HAMAP-Rule" id="MF_00373"/>
    </source>
</evidence>
<evidence type="ECO:0000305" key="2"/>
<gene>
    <name evidence="1" type="primary">rpmB</name>
    <name type="ordered locus">DSY2679</name>
</gene>
<organism>
    <name type="scientific">Desulfitobacterium hafniense (strain Y51)</name>
    <dbReference type="NCBI Taxonomy" id="138119"/>
    <lineage>
        <taxon>Bacteria</taxon>
        <taxon>Bacillati</taxon>
        <taxon>Bacillota</taxon>
        <taxon>Clostridia</taxon>
        <taxon>Eubacteriales</taxon>
        <taxon>Desulfitobacteriaceae</taxon>
        <taxon>Desulfitobacterium</taxon>
    </lineage>
</organism>
<accession>Q24U24</accession>
<protein>
    <recommendedName>
        <fullName evidence="1">Large ribosomal subunit protein bL28</fullName>
    </recommendedName>
    <alternativeName>
        <fullName evidence="2">50S ribosomal protein L28</fullName>
    </alternativeName>
</protein>
<proteinExistence type="inferred from homology"/>
<sequence>MANVCAICGKGVASGIQVSHSHIRTKRTWKPNLQRVHAIVNGTPTRISVCTRCLRSGKVQRAV</sequence>
<reference key="1">
    <citation type="journal article" date="2006" name="J. Bacteriol.">
        <title>Complete genome sequence of the dehalorespiring bacterium Desulfitobacterium hafniense Y51 and comparison with Dehalococcoides ethenogenes 195.</title>
        <authorList>
            <person name="Nonaka H."/>
            <person name="Keresztes G."/>
            <person name="Shinoda Y."/>
            <person name="Ikenaga Y."/>
            <person name="Abe M."/>
            <person name="Naito K."/>
            <person name="Inatomi K."/>
            <person name="Furukawa K."/>
            <person name="Inui M."/>
            <person name="Yukawa H."/>
        </authorList>
    </citation>
    <scope>NUCLEOTIDE SEQUENCE [LARGE SCALE GENOMIC DNA]</scope>
    <source>
        <strain>Y51</strain>
    </source>
</reference>
<feature type="chain" id="PRO_1000007225" description="Large ribosomal subunit protein bL28">
    <location>
        <begin position="1"/>
        <end position="63"/>
    </location>
</feature>
<keyword id="KW-1185">Reference proteome</keyword>
<keyword id="KW-0687">Ribonucleoprotein</keyword>
<keyword id="KW-0689">Ribosomal protein</keyword>
<dbReference type="EMBL" id="AP008230">
    <property type="protein sequence ID" value="BAE84468.1"/>
    <property type="molecule type" value="Genomic_DNA"/>
</dbReference>
<dbReference type="RefSeq" id="WP_005813371.1">
    <property type="nucleotide sequence ID" value="NC_007907.1"/>
</dbReference>
<dbReference type="SMR" id="Q24U24"/>
<dbReference type="STRING" id="138119.DSY2679"/>
<dbReference type="KEGG" id="dsy:DSY2679"/>
<dbReference type="eggNOG" id="COG0227">
    <property type="taxonomic scope" value="Bacteria"/>
</dbReference>
<dbReference type="HOGENOM" id="CLU_064548_7_0_9"/>
<dbReference type="Proteomes" id="UP000001946">
    <property type="component" value="Chromosome"/>
</dbReference>
<dbReference type="GO" id="GO:1990904">
    <property type="term" value="C:ribonucleoprotein complex"/>
    <property type="evidence" value="ECO:0007669"/>
    <property type="project" value="UniProtKB-KW"/>
</dbReference>
<dbReference type="GO" id="GO:0005840">
    <property type="term" value="C:ribosome"/>
    <property type="evidence" value="ECO:0007669"/>
    <property type="project" value="UniProtKB-KW"/>
</dbReference>
<dbReference type="GO" id="GO:0003735">
    <property type="term" value="F:structural constituent of ribosome"/>
    <property type="evidence" value="ECO:0007669"/>
    <property type="project" value="InterPro"/>
</dbReference>
<dbReference type="GO" id="GO:0006412">
    <property type="term" value="P:translation"/>
    <property type="evidence" value="ECO:0007669"/>
    <property type="project" value="UniProtKB-UniRule"/>
</dbReference>
<dbReference type="Gene3D" id="2.30.170.40">
    <property type="entry name" value="Ribosomal protein L28/L24"/>
    <property type="match status" value="1"/>
</dbReference>
<dbReference type="HAMAP" id="MF_00373">
    <property type="entry name" value="Ribosomal_bL28"/>
    <property type="match status" value="1"/>
</dbReference>
<dbReference type="InterPro" id="IPR050096">
    <property type="entry name" value="Bacterial_rp_bL28"/>
</dbReference>
<dbReference type="InterPro" id="IPR026569">
    <property type="entry name" value="Ribosomal_bL28"/>
</dbReference>
<dbReference type="InterPro" id="IPR034704">
    <property type="entry name" value="Ribosomal_bL28/bL31-like_sf"/>
</dbReference>
<dbReference type="InterPro" id="IPR001383">
    <property type="entry name" value="Ribosomal_bL28_bact-type"/>
</dbReference>
<dbReference type="InterPro" id="IPR037147">
    <property type="entry name" value="Ribosomal_bL28_sf"/>
</dbReference>
<dbReference type="NCBIfam" id="TIGR00009">
    <property type="entry name" value="L28"/>
    <property type="match status" value="1"/>
</dbReference>
<dbReference type="PANTHER" id="PTHR39080">
    <property type="entry name" value="50S RIBOSOMAL PROTEIN L28"/>
    <property type="match status" value="1"/>
</dbReference>
<dbReference type="PANTHER" id="PTHR39080:SF1">
    <property type="entry name" value="LARGE RIBOSOMAL SUBUNIT PROTEIN BL28A"/>
    <property type="match status" value="1"/>
</dbReference>
<dbReference type="Pfam" id="PF00830">
    <property type="entry name" value="Ribosomal_L28"/>
    <property type="match status" value="1"/>
</dbReference>
<dbReference type="SUPFAM" id="SSF143800">
    <property type="entry name" value="L28p-like"/>
    <property type="match status" value="1"/>
</dbReference>
<name>RL28_DESHY</name>